<accession>Q9SJF1</accession>
<evidence type="ECO:0000250" key="1">
    <source>
        <dbReference type="UniProtKB" id="O31743"/>
    </source>
</evidence>
<evidence type="ECO:0000255" key="2">
    <source>
        <dbReference type="PROSITE-ProRule" id="PRU00768"/>
    </source>
</evidence>
<evidence type="ECO:0000255" key="3">
    <source>
        <dbReference type="PROSITE-ProRule" id="PRU01058"/>
    </source>
</evidence>
<evidence type="ECO:0000256" key="4">
    <source>
        <dbReference type="SAM" id="MobiDB-lite"/>
    </source>
</evidence>
<evidence type="ECO:0000269" key="5">
    <source>
    </source>
</evidence>
<evidence type="ECO:0000303" key="6">
    <source>
    </source>
</evidence>
<evidence type="ECO:0000303" key="7">
    <source>
    </source>
</evidence>
<evidence type="ECO:0000305" key="8"/>
<evidence type="ECO:0000305" key="9">
    <source>
    </source>
</evidence>
<evidence type="ECO:0000312" key="10">
    <source>
        <dbReference type="Araport" id="AT1G08410"/>
    </source>
</evidence>
<evidence type="ECO:0000312" key="11">
    <source>
        <dbReference type="EMBL" id="AAF22888.1"/>
    </source>
</evidence>
<evidence type="ECO:0000312" key="12">
    <source>
        <dbReference type="Proteomes" id="UP000006548"/>
    </source>
</evidence>
<name>LSG12_ARATH</name>
<protein>
    <recommendedName>
        <fullName evidence="7">GTPase LSG1-2</fullName>
        <shortName evidence="7">AtLSG1-2</shortName>
    </recommendedName>
    <alternativeName>
        <fullName evidence="6">DAR GTPase 7</fullName>
    </alternativeName>
    <alternativeName>
        <fullName evidence="7">Protein YEAST LSG1 ORTHOLOG 2</fullName>
    </alternativeName>
</protein>
<proteinExistence type="evidence at protein level"/>
<keyword id="KW-0025">Alternative splicing</keyword>
<keyword id="KW-0963">Cytoplasm</keyword>
<keyword id="KW-0342">GTP-binding</keyword>
<keyword id="KW-0378">Hydrolase</keyword>
<keyword id="KW-0547">Nucleotide-binding</keyword>
<keyword id="KW-0539">Nucleus</keyword>
<keyword id="KW-1185">Reference proteome</keyword>
<feature type="chain" id="PRO_0000432560" description="GTPase LSG1-2">
    <location>
        <begin position="1"/>
        <end position="589"/>
    </location>
</feature>
<feature type="domain" description="CP-type G" evidence="3">
    <location>
        <begin position="158"/>
        <end position="366"/>
    </location>
</feature>
<feature type="region of interest" description="Disordered" evidence="4">
    <location>
        <begin position="1"/>
        <end position="26"/>
    </location>
</feature>
<feature type="region of interest" description="G4" evidence="3">
    <location>
        <begin position="206"/>
        <end position="209"/>
    </location>
</feature>
<feature type="region of interest" description="G5" evidence="3">
    <location>
        <begin position="237"/>
        <end position="239"/>
    </location>
</feature>
<feature type="region of interest" description="G1" evidence="3">
    <location>
        <begin position="315"/>
        <end position="322"/>
    </location>
</feature>
<feature type="region of interest" description="G2" evidence="3">
    <location>
        <begin position="341"/>
        <end position="345"/>
    </location>
</feature>
<feature type="region of interest" description="G3" evidence="3">
    <location>
        <begin position="359"/>
        <end position="362"/>
    </location>
</feature>
<feature type="region of interest" description="Disordered" evidence="4">
    <location>
        <begin position="495"/>
        <end position="515"/>
    </location>
</feature>
<feature type="region of interest" description="Disordered" evidence="4">
    <location>
        <begin position="534"/>
        <end position="589"/>
    </location>
</feature>
<feature type="short sequence motif" description="DARXP motif">
    <location>
        <begin position="176"/>
        <end position="180"/>
    </location>
</feature>
<feature type="short sequence motif" description="Nuclear localization signal" evidence="2">
    <location>
        <begin position="534"/>
        <end position="541"/>
    </location>
</feature>
<feature type="compositionally biased region" description="Acidic residues" evidence="4">
    <location>
        <begin position="495"/>
        <end position="509"/>
    </location>
</feature>
<feature type="compositionally biased region" description="Basic residues" evidence="4">
    <location>
        <begin position="534"/>
        <end position="558"/>
    </location>
</feature>
<feature type="compositionally biased region" description="Polar residues" evidence="4">
    <location>
        <begin position="580"/>
        <end position="589"/>
    </location>
</feature>
<feature type="binding site" evidence="1">
    <location>
        <begin position="206"/>
        <end position="209"/>
    </location>
    <ligand>
        <name>GTP</name>
        <dbReference type="ChEBI" id="CHEBI:37565"/>
    </ligand>
</feature>
<feature type="binding site" evidence="1">
    <location>
        <begin position="318"/>
        <end position="323"/>
    </location>
    <ligand>
        <name>GTP</name>
        <dbReference type="ChEBI" id="CHEBI:37565"/>
    </ligand>
</feature>
<feature type="binding site" evidence="1">
    <location>
        <position position="362"/>
    </location>
    <ligand>
        <name>GTP</name>
        <dbReference type="ChEBI" id="CHEBI:37565"/>
    </ligand>
</feature>
<reference key="1">
    <citation type="journal article" date="2000" name="Nature">
        <title>Sequence and analysis of chromosome 1 of the plant Arabidopsis thaliana.</title>
        <authorList>
            <person name="Theologis A."/>
            <person name="Ecker J.R."/>
            <person name="Palm C.J."/>
            <person name="Federspiel N.A."/>
            <person name="Kaul S."/>
            <person name="White O."/>
            <person name="Alonso J."/>
            <person name="Altafi H."/>
            <person name="Araujo R."/>
            <person name="Bowman C.L."/>
            <person name="Brooks S.Y."/>
            <person name="Buehler E."/>
            <person name="Chan A."/>
            <person name="Chao Q."/>
            <person name="Chen H."/>
            <person name="Cheuk R.F."/>
            <person name="Chin C.W."/>
            <person name="Chung M.K."/>
            <person name="Conn L."/>
            <person name="Conway A.B."/>
            <person name="Conway A.R."/>
            <person name="Creasy T.H."/>
            <person name="Dewar K."/>
            <person name="Dunn P."/>
            <person name="Etgu P."/>
            <person name="Feldblyum T.V."/>
            <person name="Feng J.-D."/>
            <person name="Fong B."/>
            <person name="Fujii C.Y."/>
            <person name="Gill J.E."/>
            <person name="Goldsmith A.D."/>
            <person name="Haas B."/>
            <person name="Hansen N.F."/>
            <person name="Hughes B."/>
            <person name="Huizar L."/>
            <person name="Hunter J.L."/>
            <person name="Jenkins J."/>
            <person name="Johnson-Hopson C."/>
            <person name="Khan S."/>
            <person name="Khaykin E."/>
            <person name="Kim C.J."/>
            <person name="Koo H.L."/>
            <person name="Kremenetskaia I."/>
            <person name="Kurtz D.B."/>
            <person name="Kwan A."/>
            <person name="Lam B."/>
            <person name="Langin-Hooper S."/>
            <person name="Lee A."/>
            <person name="Lee J.M."/>
            <person name="Lenz C.A."/>
            <person name="Li J.H."/>
            <person name="Li Y.-P."/>
            <person name="Lin X."/>
            <person name="Liu S.X."/>
            <person name="Liu Z.A."/>
            <person name="Luros J.S."/>
            <person name="Maiti R."/>
            <person name="Marziali A."/>
            <person name="Militscher J."/>
            <person name="Miranda M."/>
            <person name="Nguyen M."/>
            <person name="Nierman W.C."/>
            <person name="Osborne B.I."/>
            <person name="Pai G."/>
            <person name="Peterson J."/>
            <person name="Pham P.K."/>
            <person name="Rizzo M."/>
            <person name="Rooney T."/>
            <person name="Rowley D."/>
            <person name="Sakano H."/>
            <person name="Salzberg S.L."/>
            <person name="Schwartz J.R."/>
            <person name="Shinn P."/>
            <person name="Southwick A.M."/>
            <person name="Sun H."/>
            <person name="Tallon L.J."/>
            <person name="Tambunga G."/>
            <person name="Toriumi M.J."/>
            <person name="Town C.D."/>
            <person name="Utterback T."/>
            <person name="Van Aken S."/>
            <person name="Vaysberg M."/>
            <person name="Vysotskaia V.S."/>
            <person name="Walker M."/>
            <person name="Wu D."/>
            <person name="Yu G."/>
            <person name="Fraser C.M."/>
            <person name="Venter J.C."/>
            <person name="Davis R.W."/>
        </authorList>
    </citation>
    <scope>NUCLEOTIDE SEQUENCE [LARGE SCALE GENOMIC DNA]</scope>
    <source>
        <strain>cv. Columbia</strain>
    </source>
</reference>
<reference key="2">
    <citation type="journal article" date="2017" name="Plant J.">
        <title>Araport11: a complete reannotation of the Arabidopsis thaliana reference genome.</title>
        <authorList>
            <person name="Cheng C.Y."/>
            <person name="Krishnakumar V."/>
            <person name="Chan A.P."/>
            <person name="Thibaud-Nissen F."/>
            <person name="Schobel S."/>
            <person name="Town C.D."/>
        </authorList>
    </citation>
    <scope>GENOME REANNOTATION</scope>
    <source>
        <strain>cv. Columbia</strain>
    </source>
</reference>
<reference key="3">
    <citation type="submission" date="2005-05" db="EMBL/GenBank/DDBJ databases">
        <title>Arabidopsis ORF clones.</title>
        <authorList>
            <person name="Cheuk R."/>
            <person name="Chen H."/>
            <person name="Kim C.J."/>
            <person name="Shinn P."/>
            <person name="Ecker J.R."/>
        </authorList>
    </citation>
    <scope>NUCLEOTIDE SEQUENCE [LARGE SCALE MRNA]</scope>
    <source>
        <strain>cv. Columbia</strain>
    </source>
</reference>
<reference key="4">
    <citation type="submission" date="2007-03" db="EMBL/GenBank/DDBJ databases">
        <title>Arabidopsis ORF clones.</title>
        <authorList>
            <person name="Bautista V.R."/>
            <person name="Kim C.J."/>
            <person name="Chen H."/>
            <person name="Wu S.Y."/>
            <person name="De Los Reyes C."/>
            <person name="Ecker J.R."/>
        </authorList>
    </citation>
    <scope>NUCLEOTIDE SEQUENCE [LARGE SCALE MRNA]</scope>
    <source>
        <strain>cv. Columbia</strain>
    </source>
</reference>
<reference key="5">
    <citation type="journal article" date="1998" name="Gene">
        <title>Analysis of the genomic organisation of a small chromosome of Leishmania braziliensis M2903 reveals two genes encoding GTP-binding proteins, one of which belongs to a new G-protein family and is an antigen.</title>
        <authorList>
            <person name="Fu G."/>
            <person name="Melville S."/>
            <person name="Brewster S."/>
            <person name="Warner J."/>
            <person name="Barker D.C."/>
        </authorList>
    </citation>
    <scope>DOMAIN</scope>
    <scope>GENE FAMILY</scope>
</reference>
<reference key="6">
    <citation type="journal article" date="2006" name="Genetics">
        <title>Arabidopsis SHORT INTEGUMENTS 2 is a mitochondrial DAR GTPase.</title>
        <authorList>
            <person name="Hill T.A."/>
            <person name="Broadhvest J."/>
            <person name="Kuzoff R.K."/>
            <person name="Gasser C.S."/>
        </authorList>
    </citation>
    <scope>GENE FAMILY</scope>
    <scope>NOMENCLATURE</scope>
</reference>
<reference key="7">
    <citation type="journal article" date="2014" name="Plant J.">
        <title>The 60S associated ribosome biogenesis factor LSG1-2 is required for 40S maturation in Arabidopsis thaliana.</title>
        <authorList>
            <person name="Weis B.L."/>
            <person name="Missbach S."/>
            <person name="Marzi J."/>
            <person name="Bohnsack M.T."/>
            <person name="Schleiff E."/>
        </authorList>
    </citation>
    <scope>FUNCTION</scope>
    <scope>BIOPHYSICOCHEMICAL PROPERTIES</scope>
    <scope>SUBCELLULAR LOCATION</scope>
    <scope>TISSUE SPECIFICITY</scope>
    <scope>3D-STRUCTURE MODELING</scope>
    <scope>DISRUPTION PHENOTYPE</scope>
</reference>
<organism evidence="12">
    <name type="scientific">Arabidopsis thaliana</name>
    <name type="common">Mouse-ear cress</name>
    <dbReference type="NCBI Taxonomy" id="3702"/>
    <lineage>
        <taxon>Eukaryota</taxon>
        <taxon>Viridiplantae</taxon>
        <taxon>Streptophyta</taxon>
        <taxon>Embryophyta</taxon>
        <taxon>Tracheophyta</taxon>
        <taxon>Spermatophyta</taxon>
        <taxon>Magnoliopsida</taxon>
        <taxon>eudicotyledons</taxon>
        <taxon>Gunneridae</taxon>
        <taxon>Pentapetalae</taxon>
        <taxon>rosids</taxon>
        <taxon>malvids</taxon>
        <taxon>Brassicales</taxon>
        <taxon>Brassicaceae</taxon>
        <taxon>Camelineae</taxon>
        <taxon>Arabidopsis</taxon>
    </lineage>
</organism>
<dbReference type="EMBL" id="AC006932">
    <property type="protein sequence ID" value="AAF22888.1"/>
    <property type="molecule type" value="Genomic_DNA"/>
</dbReference>
<dbReference type="EMBL" id="CP002684">
    <property type="protein sequence ID" value="AEE28286.1"/>
    <property type="molecule type" value="Genomic_DNA"/>
</dbReference>
<dbReference type="EMBL" id="BT023444">
    <property type="protein sequence ID" value="AAY56435.1"/>
    <property type="molecule type" value="mRNA"/>
</dbReference>
<dbReference type="EMBL" id="BT030367">
    <property type="protein sequence ID" value="ABO38780.1"/>
    <property type="molecule type" value="mRNA"/>
</dbReference>
<dbReference type="RefSeq" id="NP_172317.1">
    <molecule id="Q9SJF1-1"/>
    <property type="nucleotide sequence ID" value="NM_100714.3"/>
</dbReference>
<dbReference type="SMR" id="Q9SJF1"/>
<dbReference type="FunCoup" id="Q9SJF1">
    <property type="interactions" value="4348"/>
</dbReference>
<dbReference type="STRING" id="3702.Q9SJF1"/>
<dbReference type="GlyGen" id="Q9SJF1">
    <property type="glycosylation" value="1 site"/>
</dbReference>
<dbReference type="PaxDb" id="3702-AT1G08410.1"/>
<dbReference type="ProteomicsDB" id="238679">
    <molecule id="Q9SJF1-1"/>
</dbReference>
<dbReference type="EnsemblPlants" id="AT1G08410.1">
    <molecule id="Q9SJF1-1"/>
    <property type="protein sequence ID" value="AT1G08410.1"/>
    <property type="gene ID" value="AT1G08410"/>
</dbReference>
<dbReference type="GeneID" id="837361"/>
<dbReference type="Gramene" id="AT1G08410.1">
    <molecule id="Q9SJF1-1"/>
    <property type="protein sequence ID" value="AT1G08410.1"/>
    <property type="gene ID" value="AT1G08410"/>
</dbReference>
<dbReference type="KEGG" id="ath:AT1G08410"/>
<dbReference type="Araport" id="AT1G08410"/>
<dbReference type="TAIR" id="AT1G08410">
    <property type="gene designation" value="LSG1-2"/>
</dbReference>
<dbReference type="eggNOG" id="KOG1424">
    <property type="taxonomic scope" value="Eukaryota"/>
</dbReference>
<dbReference type="HOGENOM" id="CLU_011072_10_0_1"/>
<dbReference type="InParanoid" id="Q9SJF1"/>
<dbReference type="OMA" id="WETNDLE"/>
<dbReference type="OrthoDB" id="61815at2759"/>
<dbReference type="PhylomeDB" id="Q9SJF1"/>
<dbReference type="CD-CODE" id="4299E36E">
    <property type="entry name" value="Nucleolus"/>
</dbReference>
<dbReference type="PRO" id="PR:Q9SJF1"/>
<dbReference type="Proteomes" id="UP000006548">
    <property type="component" value="Chromosome 1"/>
</dbReference>
<dbReference type="ExpressionAtlas" id="Q9SJF1">
    <property type="expression patterns" value="baseline and differential"/>
</dbReference>
<dbReference type="GO" id="GO:0005829">
    <property type="term" value="C:cytosol"/>
    <property type="evidence" value="ECO:0000314"/>
    <property type="project" value="TAIR"/>
</dbReference>
<dbReference type="GO" id="GO:0005730">
    <property type="term" value="C:nucleolus"/>
    <property type="evidence" value="ECO:0000314"/>
    <property type="project" value="TAIR"/>
</dbReference>
<dbReference type="GO" id="GO:0005634">
    <property type="term" value="C:nucleus"/>
    <property type="evidence" value="ECO:0000314"/>
    <property type="project" value="TAIR"/>
</dbReference>
<dbReference type="GO" id="GO:0005525">
    <property type="term" value="F:GTP binding"/>
    <property type="evidence" value="ECO:0007669"/>
    <property type="project" value="UniProtKB-KW"/>
</dbReference>
<dbReference type="GO" id="GO:0003924">
    <property type="term" value="F:GTPase activity"/>
    <property type="evidence" value="ECO:0007669"/>
    <property type="project" value="InterPro"/>
</dbReference>
<dbReference type="GO" id="GO:0043022">
    <property type="term" value="F:ribosome binding"/>
    <property type="evidence" value="ECO:0000314"/>
    <property type="project" value="TAIR"/>
</dbReference>
<dbReference type="GO" id="GO:0048825">
    <property type="term" value="P:cotyledon development"/>
    <property type="evidence" value="ECO:0000315"/>
    <property type="project" value="TAIR"/>
</dbReference>
<dbReference type="GO" id="GO:0048366">
    <property type="term" value="P:leaf development"/>
    <property type="evidence" value="ECO:0000315"/>
    <property type="project" value="TAIR"/>
</dbReference>
<dbReference type="GO" id="GO:0090070">
    <property type="term" value="P:positive regulation of ribosome biogenesis"/>
    <property type="evidence" value="ECO:0000315"/>
    <property type="project" value="TAIR"/>
</dbReference>
<dbReference type="GO" id="GO:2000012">
    <property type="term" value="P:regulation of auxin polar transport"/>
    <property type="evidence" value="ECO:0000315"/>
    <property type="project" value="TAIR"/>
</dbReference>
<dbReference type="GO" id="GO:0042254">
    <property type="term" value="P:ribosome biogenesis"/>
    <property type="evidence" value="ECO:0000315"/>
    <property type="project" value="TAIR"/>
</dbReference>
<dbReference type="GO" id="GO:0006364">
    <property type="term" value="P:rRNA processing"/>
    <property type="evidence" value="ECO:0000315"/>
    <property type="project" value="TAIR"/>
</dbReference>
<dbReference type="CDD" id="cd01857">
    <property type="entry name" value="HSR1_MMR1"/>
    <property type="match status" value="1"/>
</dbReference>
<dbReference type="FunFam" id="1.10.1580.10:FF:000008">
    <property type="entry name" value="Large subunit GTPase 1"/>
    <property type="match status" value="1"/>
</dbReference>
<dbReference type="FunFam" id="3.40.50.300:FF:001151">
    <property type="entry name" value="Large subunit GTPase 1"/>
    <property type="match status" value="1"/>
</dbReference>
<dbReference type="Gene3D" id="1.10.1580.10">
    <property type="match status" value="1"/>
</dbReference>
<dbReference type="Gene3D" id="3.40.50.300">
    <property type="entry name" value="P-loop containing nucleotide triphosphate hydrolases"/>
    <property type="match status" value="1"/>
</dbReference>
<dbReference type="InterPro" id="IPR030378">
    <property type="entry name" value="G_CP_dom"/>
</dbReference>
<dbReference type="InterPro" id="IPR043358">
    <property type="entry name" value="GNL1-like"/>
</dbReference>
<dbReference type="InterPro" id="IPR006073">
    <property type="entry name" value="GTP-bd"/>
</dbReference>
<dbReference type="InterPro" id="IPR023179">
    <property type="entry name" value="GTP-bd_ortho_bundle_sf"/>
</dbReference>
<dbReference type="InterPro" id="IPR027417">
    <property type="entry name" value="P-loop_NTPase"/>
</dbReference>
<dbReference type="PANTHER" id="PTHR45709:SF2">
    <property type="entry name" value="LARGE SUBUNIT GTPASE 1 HOMOLOG"/>
    <property type="match status" value="1"/>
</dbReference>
<dbReference type="PANTHER" id="PTHR45709">
    <property type="entry name" value="LARGE SUBUNIT GTPASE 1 HOMOLOG-RELATED"/>
    <property type="match status" value="1"/>
</dbReference>
<dbReference type="Pfam" id="PF01926">
    <property type="entry name" value="MMR_HSR1"/>
    <property type="match status" value="1"/>
</dbReference>
<dbReference type="PRINTS" id="PR00326">
    <property type="entry name" value="GTP1OBG"/>
</dbReference>
<dbReference type="SUPFAM" id="SSF52540">
    <property type="entry name" value="P-loop containing nucleoside triphosphate hydrolases"/>
    <property type="match status" value="1"/>
</dbReference>
<dbReference type="PROSITE" id="PS51721">
    <property type="entry name" value="G_CP"/>
    <property type="match status" value="1"/>
</dbReference>
<gene>
    <name evidence="7" type="primary">LSG1-2</name>
    <name evidence="6" type="synonym">DPG7</name>
    <name evidence="10" type="ordered locus">At1g08410</name>
    <name evidence="11" type="ORF">T27G7.9</name>
</gene>
<sequence length="589" mass="66743">MGKSEKTSLGRSLVKHHNHMIQESKDKGKYYKNLQKKVLESVTEVSDIDAIIEQAEEAERLYTINHSSSTPLSINLDTNSSSSVIAAEEWREQQKIEEALHASSLQVPRRPPWTPEMSVEELDANEKQAFLNWRRMLVSLEENEKLVLTPFEKNLDIWRQLWRVLERSDLIVMVVDARDPLFYRCPDLEAYAQEIDEHKKIMLLVNKADLLPTDVREKWAEYFRLNNILFVFWSAIAATATLEGKVLKEQWRQPDNLQKTDDPDIMIYGRDELLSRLQFEAQEIVKVRNSRAASVSSQSWTGEYQRDQAVVGFVGYPNVGKSSTINALVGQKRTGVTSTPGKTKHFQTLIISDELMLCDCPGLVFPSFSSSRYEMIASGVLPIDRMTEHREAIQVVADKVPRRVIESVYNISLPKPKTYERQSRPPHAAELLKSYCASRGYVASSGLPDETKAARLILKDYIGGKLPHYAMPPGMPQADEPDIEDTQELEDILEGSESDDSAVGDETENEQVPGIDDVLDDLSSFDLANGLKSSKKVTAKKQTASHKQHKKPQRKKDRTWRVQNTEDGDGMPSVKVFQKPANTGPLTMR</sequence>
<comment type="function">
    <text evidence="5">GTPase involved in ribosome biogenesis (Probable). Binds to 23S rRNA and associates with 60S pre-ribosomes (PubMed:25319368). Involved in early cotyledon and leaf development (PubMed:25319368).</text>
</comment>
<comment type="biophysicochemical properties">
    <kinetics>
        <text evidence="5">kcat is 0.13 min(-1).</text>
    </kinetics>
</comment>
<comment type="subcellular location">
    <subcellularLocation>
        <location evidence="5">Cytoplasm</location>
    </subcellularLocation>
    <subcellularLocation>
        <location evidence="5">Nucleus</location>
    </subcellularLocation>
    <text evidence="5">The C-terminus is sufficient for the targeting into the nucleus.</text>
</comment>
<comment type="alternative products">
    <event type="alternative splicing"/>
    <isoform>
        <id>Q9SJF1-1</id>
        <name>1</name>
        <sequence type="displayed"/>
    </isoform>
    <text evidence="8">A number of isoforms are produced.</text>
</comment>
<comment type="tissue specificity">
    <text evidence="5">Ubiquitous, with the highest expression in reproductive and strongly dividing tissues.</text>
</comment>
<comment type="domain">
    <text evidence="8">In contrast to other GTP-binding proteins, this family is characterized by a circular permutation of the GTPase motifs described by a G4-G1-G3 pattern.</text>
</comment>
<comment type="domain">
    <text evidence="9">The DARXP motif is also sometime designated as G6 region.</text>
</comment>
<comment type="disruption phenotype">
    <text evidence="5">No effect on the association with 60S pre-ribosomes, but altered rRNA processing and accumulation of 18S rRNA precursors (PubMed:25319368). Embryo and leaf developmental defects (PubMed:25319368). Severe delay in development of the first true rosette leaves and frequent fused or triple cotyledons (PubMed:25319368). Lsg1-1 and lsg1-2 double mutants are lethal, when homozygous (PubMed:25319368).</text>
</comment>
<comment type="similarity">
    <text evidence="3">Belongs to the TRAFAC class YlqF/YawG GTPase family.</text>
</comment>